<comment type="function">
    <text evidence="3">Conjugation of reduced glutathione to a wide number of exogenous and endogenous hydrophobic electrophiles (PubMed:22082028). May be involved in detoxification (PubMed:22082028).</text>
</comment>
<comment type="catalytic activity">
    <reaction evidence="3">
        <text>RX + glutathione = an S-substituted glutathione + a halide anion + H(+)</text>
        <dbReference type="Rhea" id="RHEA:16437"/>
        <dbReference type="ChEBI" id="CHEBI:15378"/>
        <dbReference type="ChEBI" id="CHEBI:16042"/>
        <dbReference type="ChEBI" id="CHEBI:17792"/>
        <dbReference type="ChEBI" id="CHEBI:57925"/>
        <dbReference type="ChEBI" id="CHEBI:90779"/>
        <dbReference type="EC" id="2.5.1.18"/>
    </reaction>
</comment>
<comment type="biophysicochemical properties">
    <kinetics>
        <KM evidence="3">2.47 mM for glutathione</KM>
        <KM evidence="3">2.04 mM for 1-chloro-2,4-dinitrobenzene</KM>
        <Vmax evidence="3">0.26 umol/min/mg enzyme with 1-chloro-2,4-dinitrobenzene as substrate</Vmax>
        <Vmax evidence="3">1.45 umol/min/mg enzyme with 4-hydroxy-2-nonenal as substrate</Vmax>
        <Vmax evidence="3">99.5 nmol/min/mg enzyme with adrenochrome as substrate</Vmax>
        <Vmax evidence="3">0.044 umol/min/mg enzyme with phenethyl isothiocyanate as substrate</Vmax>
        <Vmax evidence="3">0.047 umol/min/mg enzyme with 2-hydroxyethyl disulfide as substrate</Vmax>
    </kinetics>
</comment>
<comment type="subunit">
    <text evidence="2">Homodimer.</text>
</comment>
<comment type="interaction">
    <interactant intactId="EBI-117276">
        <id>Q9VG96</id>
    </interactant>
    <interactant intactId="EBI-152218">
        <id>Q9VG94</id>
        <label>GstD6</label>
    </interactant>
    <organismsDiffer>false</organismsDiffer>
    <experiments>3</experiments>
</comment>
<comment type="similarity">
    <text evidence="4">Belongs to the GST superfamily. Delta family.</text>
</comment>
<reference key="1">
    <citation type="journal article" date="1993" name="J. Biol. Chem.">
        <title>The glutathione S-transferase D genes. A divergently organized, intronless gene family in Drosophila melanogaster.</title>
        <authorList>
            <person name="Toung Y.-P.S."/>
            <person name="Hsieh T.-S."/>
            <person name="Tu C.-P.D."/>
        </authorList>
    </citation>
    <scope>NUCLEOTIDE SEQUENCE [GENOMIC DNA]</scope>
</reference>
<reference key="2">
    <citation type="journal article" date="2000" name="Science">
        <title>The genome sequence of Drosophila melanogaster.</title>
        <authorList>
            <person name="Adams M.D."/>
            <person name="Celniker S.E."/>
            <person name="Holt R.A."/>
            <person name="Evans C.A."/>
            <person name="Gocayne J.D."/>
            <person name="Amanatides P.G."/>
            <person name="Scherer S.E."/>
            <person name="Li P.W."/>
            <person name="Hoskins R.A."/>
            <person name="Galle R.F."/>
            <person name="George R.A."/>
            <person name="Lewis S.E."/>
            <person name="Richards S."/>
            <person name="Ashburner M."/>
            <person name="Henderson S.N."/>
            <person name="Sutton G.G."/>
            <person name="Wortman J.R."/>
            <person name="Yandell M.D."/>
            <person name="Zhang Q."/>
            <person name="Chen L.X."/>
            <person name="Brandon R.C."/>
            <person name="Rogers Y.-H.C."/>
            <person name="Blazej R.G."/>
            <person name="Champe M."/>
            <person name="Pfeiffer B.D."/>
            <person name="Wan K.H."/>
            <person name="Doyle C."/>
            <person name="Baxter E.G."/>
            <person name="Helt G."/>
            <person name="Nelson C.R."/>
            <person name="Miklos G.L.G."/>
            <person name="Abril J.F."/>
            <person name="Agbayani A."/>
            <person name="An H.-J."/>
            <person name="Andrews-Pfannkoch C."/>
            <person name="Baldwin D."/>
            <person name="Ballew R.M."/>
            <person name="Basu A."/>
            <person name="Baxendale J."/>
            <person name="Bayraktaroglu L."/>
            <person name="Beasley E.M."/>
            <person name="Beeson K.Y."/>
            <person name="Benos P.V."/>
            <person name="Berman B.P."/>
            <person name="Bhandari D."/>
            <person name="Bolshakov S."/>
            <person name="Borkova D."/>
            <person name="Botchan M.R."/>
            <person name="Bouck J."/>
            <person name="Brokstein P."/>
            <person name="Brottier P."/>
            <person name="Burtis K.C."/>
            <person name="Busam D.A."/>
            <person name="Butler H."/>
            <person name="Cadieu E."/>
            <person name="Center A."/>
            <person name="Chandra I."/>
            <person name="Cherry J.M."/>
            <person name="Cawley S."/>
            <person name="Dahlke C."/>
            <person name="Davenport L.B."/>
            <person name="Davies P."/>
            <person name="de Pablos B."/>
            <person name="Delcher A."/>
            <person name="Deng Z."/>
            <person name="Mays A.D."/>
            <person name="Dew I."/>
            <person name="Dietz S.M."/>
            <person name="Dodson K."/>
            <person name="Doup L.E."/>
            <person name="Downes M."/>
            <person name="Dugan-Rocha S."/>
            <person name="Dunkov B.C."/>
            <person name="Dunn P."/>
            <person name="Durbin K.J."/>
            <person name="Evangelista C.C."/>
            <person name="Ferraz C."/>
            <person name="Ferriera S."/>
            <person name="Fleischmann W."/>
            <person name="Fosler C."/>
            <person name="Gabrielian A.E."/>
            <person name="Garg N.S."/>
            <person name="Gelbart W.M."/>
            <person name="Glasser K."/>
            <person name="Glodek A."/>
            <person name="Gong F."/>
            <person name="Gorrell J.H."/>
            <person name="Gu Z."/>
            <person name="Guan P."/>
            <person name="Harris M."/>
            <person name="Harris N.L."/>
            <person name="Harvey D.A."/>
            <person name="Heiman T.J."/>
            <person name="Hernandez J.R."/>
            <person name="Houck J."/>
            <person name="Hostin D."/>
            <person name="Houston K.A."/>
            <person name="Howland T.J."/>
            <person name="Wei M.-H."/>
            <person name="Ibegwam C."/>
            <person name="Jalali M."/>
            <person name="Kalush F."/>
            <person name="Karpen G.H."/>
            <person name="Ke Z."/>
            <person name="Kennison J.A."/>
            <person name="Ketchum K.A."/>
            <person name="Kimmel B.E."/>
            <person name="Kodira C.D."/>
            <person name="Kraft C.L."/>
            <person name="Kravitz S."/>
            <person name="Kulp D."/>
            <person name="Lai Z."/>
            <person name="Lasko P."/>
            <person name="Lei Y."/>
            <person name="Levitsky A.A."/>
            <person name="Li J.H."/>
            <person name="Li Z."/>
            <person name="Liang Y."/>
            <person name="Lin X."/>
            <person name="Liu X."/>
            <person name="Mattei B."/>
            <person name="McIntosh T.C."/>
            <person name="McLeod M.P."/>
            <person name="McPherson D."/>
            <person name="Merkulov G."/>
            <person name="Milshina N.V."/>
            <person name="Mobarry C."/>
            <person name="Morris J."/>
            <person name="Moshrefi A."/>
            <person name="Mount S.M."/>
            <person name="Moy M."/>
            <person name="Murphy B."/>
            <person name="Murphy L."/>
            <person name="Muzny D.M."/>
            <person name="Nelson D.L."/>
            <person name="Nelson D.R."/>
            <person name="Nelson K.A."/>
            <person name="Nixon K."/>
            <person name="Nusskern D.R."/>
            <person name="Pacleb J.M."/>
            <person name="Palazzolo M."/>
            <person name="Pittman G.S."/>
            <person name="Pan S."/>
            <person name="Pollard J."/>
            <person name="Puri V."/>
            <person name="Reese M.G."/>
            <person name="Reinert K."/>
            <person name="Remington K."/>
            <person name="Saunders R.D.C."/>
            <person name="Scheeler F."/>
            <person name="Shen H."/>
            <person name="Shue B.C."/>
            <person name="Siden-Kiamos I."/>
            <person name="Simpson M."/>
            <person name="Skupski M.P."/>
            <person name="Smith T.J."/>
            <person name="Spier E."/>
            <person name="Spradling A.C."/>
            <person name="Stapleton M."/>
            <person name="Strong R."/>
            <person name="Sun E."/>
            <person name="Svirskas R."/>
            <person name="Tector C."/>
            <person name="Turner R."/>
            <person name="Venter E."/>
            <person name="Wang A.H."/>
            <person name="Wang X."/>
            <person name="Wang Z.-Y."/>
            <person name="Wassarman D.A."/>
            <person name="Weinstock G.M."/>
            <person name="Weissenbach J."/>
            <person name="Williams S.M."/>
            <person name="Woodage T."/>
            <person name="Worley K.C."/>
            <person name="Wu D."/>
            <person name="Yang S."/>
            <person name="Yao Q.A."/>
            <person name="Ye J."/>
            <person name="Yeh R.-F."/>
            <person name="Zaveri J.S."/>
            <person name="Zhan M."/>
            <person name="Zhang G."/>
            <person name="Zhao Q."/>
            <person name="Zheng L."/>
            <person name="Zheng X.H."/>
            <person name="Zhong F.N."/>
            <person name="Zhong W."/>
            <person name="Zhou X."/>
            <person name="Zhu S.C."/>
            <person name="Zhu X."/>
            <person name="Smith H.O."/>
            <person name="Gibbs R.A."/>
            <person name="Myers E.W."/>
            <person name="Rubin G.M."/>
            <person name="Venter J.C."/>
        </authorList>
    </citation>
    <scope>NUCLEOTIDE SEQUENCE [LARGE SCALE GENOMIC DNA]</scope>
    <source>
        <strain>Berkeley</strain>
    </source>
</reference>
<reference key="3">
    <citation type="journal article" date="2002" name="Genome Biol.">
        <title>Annotation of the Drosophila melanogaster euchromatic genome: a systematic review.</title>
        <authorList>
            <person name="Misra S."/>
            <person name="Crosby M.A."/>
            <person name="Mungall C.J."/>
            <person name="Matthews B.B."/>
            <person name="Campbell K.S."/>
            <person name="Hradecky P."/>
            <person name="Huang Y."/>
            <person name="Kaminker J.S."/>
            <person name="Millburn G.H."/>
            <person name="Prochnik S.E."/>
            <person name="Smith C.D."/>
            <person name="Tupy J.L."/>
            <person name="Whitfield E.J."/>
            <person name="Bayraktaroglu L."/>
            <person name="Berman B.P."/>
            <person name="Bettencourt B.R."/>
            <person name="Celniker S.E."/>
            <person name="de Grey A.D.N.J."/>
            <person name="Drysdale R.A."/>
            <person name="Harris N.L."/>
            <person name="Richter J."/>
            <person name="Russo S."/>
            <person name="Schroeder A.J."/>
            <person name="Shu S.Q."/>
            <person name="Stapleton M."/>
            <person name="Yamada C."/>
            <person name="Ashburner M."/>
            <person name="Gelbart W.M."/>
            <person name="Rubin G.M."/>
            <person name="Lewis S.E."/>
        </authorList>
    </citation>
    <scope>GENOME REANNOTATION</scope>
    <source>
        <strain>Berkeley</strain>
    </source>
</reference>
<reference key="4">
    <citation type="submission" date="2003-12" db="EMBL/GenBank/DDBJ databases">
        <authorList>
            <person name="Stapleton M."/>
            <person name="Brokstein P."/>
            <person name="Hong L."/>
            <person name="Agbayani A."/>
            <person name="Carlson J.W."/>
            <person name="Champe M."/>
            <person name="Chavez C."/>
            <person name="Dorsett V."/>
            <person name="Dresnek D."/>
            <person name="Farfan D."/>
            <person name="Frise E."/>
            <person name="George R.A."/>
            <person name="Gonzalez M."/>
            <person name="Guarin H."/>
            <person name="Kronmiller B."/>
            <person name="Li P.W."/>
            <person name="Liao G."/>
            <person name="Miranda A."/>
            <person name="Mungall C.J."/>
            <person name="Nunoo J."/>
            <person name="Pacleb J.M."/>
            <person name="Paragas V."/>
            <person name="Park S."/>
            <person name="Patel S."/>
            <person name="Phouanenavong S."/>
            <person name="Wan K.H."/>
            <person name="Yu C."/>
            <person name="Lewis S.E."/>
            <person name="Rubin G.M."/>
            <person name="Celniker S.E."/>
        </authorList>
    </citation>
    <scope>NUCLEOTIDE SEQUENCE [LARGE SCALE MRNA]</scope>
    <source>
        <strain>Berkeley</strain>
        <tissue>Embryo</tissue>
    </source>
</reference>
<reference key="5">
    <citation type="journal article" date="2012" name="Biochem. J.">
        <title>A preliminary characterization of the cytosolic glutathione transferase proteome from Drosophila melanogaster.</title>
        <authorList>
            <person name="Saisawang C."/>
            <person name="Wongsantichon J."/>
            <person name="Ketterman A.J."/>
        </authorList>
    </citation>
    <scope>FUNCTION</scope>
    <scope>CATALYTIC ACTIVITY</scope>
    <scope>BIOPHYSICOCHEMICAL PROPERTIES</scope>
</reference>
<organism>
    <name type="scientific">Drosophila melanogaster</name>
    <name type="common">Fruit fly</name>
    <dbReference type="NCBI Taxonomy" id="7227"/>
    <lineage>
        <taxon>Eukaryota</taxon>
        <taxon>Metazoa</taxon>
        <taxon>Ecdysozoa</taxon>
        <taxon>Arthropoda</taxon>
        <taxon>Hexapoda</taxon>
        <taxon>Insecta</taxon>
        <taxon>Pterygota</taxon>
        <taxon>Neoptera</taxon>
        <taxon>Endopterygota</taxon>
        <taxon>Diptera</taxon>
        <taxon>Brachycera</taxon>
        <taxon>Muscomorpha</taxon>
        <taxon>Ephydroidea</taxon>
        <taxon>Drosophilidae</taxon>
        <taxon>Drosophila</taxon>
        <taxon>Sophophora</taxon>
    </lineage>
</organism>
<gene>
    <name evidence="6" type="primary">GstD4</name>
    <name type="synonym">gstD23</name>
    <name evidence="6" type="synonym">GSTD4-4</name>
    <name evidence="6" type="ORF">CG11512</name>
</gene>
<protein>
    <recommendedName>
        <fullName evidence="4">Glutathione S-transferase D4</fullName>
        <ecNumber evidence="3">2.5.1.18</ecNumber>
    </recommendedName>
</protein>
<evidence type="ECO:0000250" key="1"/>
<evidence type="ECO:0000250" key="2">
    <source>
        <dbReference type="UniProtKB" id="P30711"/>
    </source>
</evidence>
<evidence type="ECO:0000269" key="3">
    <source>
    </source>
</evidence>
<evidence type="ECO:0000303" key="4">
    <source>
    </source>
</evidence>
<evidence type="ECO:0000305" key="5"/>
<evidence type="ECO:0000312" key="6">
    <source>
        <dbReference type="FlyBase" id="FBgn0010040"/>
    </source>
</evidence>
<accession>Q9VG96</accession>
<accession>Q541F8</accession>
<accession>Q9TX90</accession>
<keyword id="KW-0216">Detoxification</keyword>
<keyword id="KW-1185">Reference proteome</keyword>
<keyword id="KW-0808">Transferase</keyword>
<name>GSTD4_DROME</name>
<dbReference type="EC" id="2.5.1.18" evidence="3"/>
<dbReference type="EMBL" id="M97702">
    <property type="status" value="NOT_ANNOTATED_CDS"/>
    <property type="molecule type" value="Genomic_DNA"/>
</dbReference>
<dbReference type="EMBL" id="AE014297">
    <property type="protein sequence ID" value="AAF54789.1"/>
    <property type="molecule type" value="Genomic_DNA"/>
</dbReference>
<dbReference type="EMBL" id="AY071648">
    <property type="protein sequence ID" value="AAL49270.1"/>
    <property type="molecule type" value="mRNA"/>
</dbReference>
<dbReference type="PIR" id="E46681">
    <property type="entry name" value="E46681"/>
</dbReference>
<dbReference type="RefSeq" id="NP_524913.1">
    <property type="nucleotide sequence ID" value="NM_080174.4"/>
</dbReference>
<dbReference type="SMR" id="Q9VG96"/>
<dbReference type="BioGRID" id="71334">
    <property type="interactions" value="9"/>
</dbReference>
<dbReference type="DIP" id="DIP-19902N"/>
<dbReference type="FunCoup" id="Q9VG96">
    <property type="interactions" value="181"/>
</dbReference>
<dbReference type="IntAct" id="Q9VG96">
    <property type="interactions" value="9"/>
</dbReference>
<dbReference type="STRING" id="7227.FBpp0082043"/>
<dbReference type="PaxDb" id="7227-FBpp0082043"/>
<dbReference type="EnsemblMetazoa" id="FBtr0082571">
    <property type="protein sequence ID" value="FBpp0082043"/>
    <property type="gene ID" value="FBgn0010040"/>
</dbReference>
<dbReference type="GeneID" id="48337"/>
<dbReference type="KEGG" id="dme:Dmel_CG11512"/>
<dbReference type="AGR" id="FB:FBgn0010040"/>
<dbReference type="CTD" id="48337"/>
<dbReference type="FlyBase" id="FBgn0010040">
    <property type="gene designation" value="GstD4"/>
</dbReference>
<dbReference type="VEuPathDB" id="VectorBase:FBgn0010040"/>
<dbReference type="eggNOG" id="KOG0867">
    <property type="taxonomic scope" value="Eukaryota"/>
</dbReference>
<dbReference type="GeneTree" id="ENSGT00940000164816"/>
<dbReference type="HOGENOM" id="CLU_011226_2_1_1"/>
<dbReference type="InParanoid" id="Q9VG96"/>
<dbReference type="OMA" id="WDENWKG"/>
<dbReference type="OrthoDB" id="2309723at2759"/>
<dbReference type="PhylomeDB" id="Q9VG96"/>
<dbReference type="SABIO-RK" id="Q9VG96"/>
<dbReference type="BioGRID-ORCS" id="48337">
    <property type="hits" value="0 hits in 1 CRISPR screen"/>
</dbReference>
<dbReference type="GenomeRNAi" id="48337"/>
<dbReference type="PRO" id="PR:Q9VG96"/>
<dbReference type="Proteomes" id="UP000000803">
    <property type="component" value="Chromosome 3R"/>
</dbReference>
<dbReference type="Bgee" id="FBgn0010040">
    <property type="expression patterns" value="Expressed in adult posterior midgut class II enteroendocrine cell in adult midgut (Drosophila) and 17 other cell types or tissues"/>
</dbReference>
<dbReference type="GO" id="GO:0005737">
    <property type="term" value="C:cytoplasm"/>
    <property type="evidence" value="ECO:0000250"/>
    <property type="project" value="FlyBase"/>
</dbReference>
<dbReference type="GO" id="GO:0004364">
    <property type="term" value="F:glutathione transferase activity"/>
    <property type="evidence" value="ECO:0000314"/>
    <property type="project" value="FlyBase"/>
</dbReference>
<dbReference type="GO" id="GO:0006749">
    <property type="term" value="P:glutathione metabolic process"/>
    <property type="evidence" value="ECO:0000314"/>
    <property type="project" value="FlyBase"/>
</dbReference>
<dbReference type="GO" id="GO:0009636">
    <property type="term" value="P:response to toxic substance"/>
    <property type="evidence" value="ECO:0007669"/>
    <property type="project" value="UniProtKB-KW"/>
</dbReference>
<dbReference type="CDD" id="cd03177">
    <property type="entry name" value="GST_C_Delta_Epsilon"/>
    <property type="match status" value="1"/>
</dbReference>
<dbReference type="CDD" id="cd03045">
    <property type="entry name" value="GST_N_Delta_Epsilon"/>
    <property type="match status" value="1"/>
</dbReference>
<dbReference type="FunFam" id="3.40.30.10:FF:000034">
    <property type="entry name" value="glutathione S-transferase 1"/>
    <property type="match status" value="1"/>
</dbReference>
<dbReference type="FunFam" id="1.20.1050.10:FF:000007">
    <property type="entry name" value="Glutathione S-transferase 1-1"/>
    <property type="match status" value="1"/>
</dbReference>
<dbReference type="Gene3D" id="1.20.1050.10">
    <property type="match status" value="1"/>
</dbReference>
<dbReference type="Gene3D" id="3.40.30.10">
    <property type="entry name" value="Glutaredoxin"/>
    <property type="match status" value="1"/>
</dbReference>
<dbReference type="InterPro" id="IPR010987">
    <property type="entry name" value="Glutathione-S-Trfase_C-like"/>
</dbReference>
<dbReference type="InterPro" id="IPR036282">
    <property type="entry name" value="Glutathione-S-Trfase_C_sf"/>
</dbReference>
<dbReference type="InterPro" id="IPR004045">
    <property type="entry name" value="Glutathione_S-Trfase_N"/>
</dbReference>
<dbReference type="InterPro" id="IPR004046">
    <property type="entry name" value="GST_C"/>
</dbReference>
<dbReference type="InterPro" id="IPR036249">
    <property type="entry name" value="Thioredoxin-like_sf"/>
</dbReference>
<dbReference type="PANTHER" id="PTHR43969">
    <property type="entry name" value="GLUTATHIONE S TRANSFERASE D10, ISOFORM A-RELATED"/>
    <property type="match status" value="1"/>
</dbReference>
<dbReference type="PANTHER" id="PTHR43969:SF9">
    <property type="entry name" value="GLUTATHIONE S TRANSFERASE D10, ISOFORM A-RELATED"/>
    <property type="match status" value="1"/>
</dbReference>
<dbReference type="Pfam" id="PF00043">
    <property type="entry name" value="GST_C"/>
    <property type="match status" value="1"/>
</dbReference>
<dbReference type="Pfam" id="PF02798">
    <property type="entry name" value="GST_N"/>
    <property type="match status" value="1"/>
</dbReference>
<dbReference type="SFLD" id="SFLDG01153">
    <property type="entry name" value="Main.4:_Theta-like"/>
    <property type="match status" value="1"/>
</dbReference>
<dbReference type="SFLD" id="SFLDG00358">
    <property type="entry name" value="Main_(cytGST)"/>
    <property type="match status" value="1"/>
</dbReference>
<dbReference type="SUPFAM" id="SSF47616">
    <property type="entry name" value="GST C-terminal domain-like"/>
    <property type="match status" value="1"/>
</dbReference>
<dbReference type="SUPFAM" id="SSF52833">
    <property type="entry name" value="Thioredoxin-like"/>
    <property type="match status" value="1"/>
</dbReference>
<dbReference type="PROSITE" id="PS50405">
    <property type="entry name" value="GST_CTER"/>
    <property type="match status" value="1"/>
</dbReference>
<dbReference type="PROSITE" id="PS50404">
    <property type="entry name" value="GST_NTER"/>
    <property type="match status" value="1"/>
</dbReference>
<sequence>MDFYYSPRSSGSRTIIMVAKALGLELNKKQLRITEGEHLKPEFLKLNPQHTIPTLVDNGFAIWESRAIAVYLVEKYGKDDSLFPNDPQKRALINQRLYFDMGTLHDSFMKYYYPFIRTGQLGNAENYKKVEAAFEFLDIFLEGQDYVAGSQLTVADIAILSSVSTFEVVEFDISKYPNVARWYANAKKITPGWDENWKGLLQMKTMYEAQKASLK</sequence>
<proteinExistence type="evidence at protein level"/>
<feature type="chain" id="PRO_0000185956" description="Glutathione S-transferase D4">
    <location>
        <begin position="1"/>
        <end position="215"/>
    </location>
</feature>
<feature type="domain" description="GST N-terminal">
    <location>
        <begin position="1"/>
        <end position="80"/>
    </location>
</feature>
<feature type="domain" description="GST C-terminal">
    <location>
        <begin position="86"/>
        <end position="207"/>
    </location>
</feature>
<feature type="binding site" evidence="1">
    <location>
        <position position="9"/>
    </location>
    <ligand>
        <name>glutathione</name>
        <dbReference type="ChEBI" id="CHEBI:57925"/>
    </ligand>
</feature>
<feature type="binding site" evidence="1">
    <location>
        <begin position="50"/>
        <end position="52"/>
    </location>
    <ligand>
        <name>glutathione</name>
        <dbReference type="ChEBI" id="CHEBI:57925"/>
    </ligand>
</feature>
<feature type="binding site" evidence="1">
    <location>
        <begin position="64"/>
        <end position="66"/>
    </location>
    <ligand>
        <name>glutathione</name>
        <dbReference type="ChEBI" id="CHEBI:57925"/>
    </ligand>
</feature>
<feature type="sequence conflict" description="In Ref. 1; M97702." evidence="5" ref="1">
    <original>E</original>
    <variation>V</variation>
    <location>
        <position position="142"/>
    </location>
</feature>